<comment type="function">
    <text evidence="1 3">Regulatory subunit of the error prone DNA polymerase zeta. Involved in damage-tolerance mechanisms through translesion DNA synthesis (By similarity).</text>
</comment>
<comment type="subunit">
    <text evidence="1">Forms DNA polymerase zeta with REV3.</text>
</comment>
<comment type="subcellular location">
    <subcellularLocation>
        <location evidence="1">Nucleus</location>
    </subcellularLocation>
</comment>
<comment type="similarity">
    <text evidence="4">Belongs to the MAD2 family.</text>
</comment>
<comment type="sequence caution" evidence="4">
    <conflict type="erroneous gene model prediction">
        <sequence resource="EMBL-CDS" id="AAG10822"/>
    </conflict>
</comment>
<proteinExistence type="evidence at transcript level"/>
<reference key="1">
    <citation type="submission" date="2001-04" db="EMBL/GenBank/DDBJ databases">
        <title>AtREV7 is a putative plant homolog of the yeast REV7 translesion synthesis gene.</title>
        <authorList>
            <person name="Wilson L.J."/>
            <person name="Vonarx E.J."/>
            <person name="Straffon A.F."/>
            <person name="Kunz B.A."/>
        </authorList>
    </citation>
    <scope>NUCLEOTIDE SEQUENCE [MRNA]</scope>
</reference>
<reference key="2">
    <citation type="journal article" date="2000" name="Nature">
        <title>Sequence and analysis of chromosome 1 of the plant Arabidopsis thaliana.</title>
        <authorList>
            <person name="Theologis A."/>
            <person name="Ecker J.R."/>
            <person name="Palm C.J."/>
            <person name="Federspiel N.A."/>
            <person name="Kaul S."/>
            <person name="White O."/>
            <person name="Alonso J."/>
            <person name="Altafi H."/>
            <person name="Araujo R."/>
            <person name="Bowman C.L."/>
            <person name="Brooks S.Y."/>
            <person name="Buehler E."/>
            <person name="Chan A."/>
            <person name="Chao Q."/>
            <person name="Chen H."/>
            <person name="Cheuk R.F."/>
            <person name="Chin C.W."/>
            <person name="Chung M.K."/>
            <person name="Conn L."/>
            <person name="Conway A.B."/>
            <person name="Conway A.R."/>
            <person name="Creasy T.H."/>
            <person name="Dewar K."/>
            <person name="Dunn P."/>
            <person name="Etgu P."/>
            <person name="Feldblyum T.V."/>
            <person name="Feng J.-D."/>
            <person name="Fong B."/>
            <person name="Fujii C.Y."/>
            <person name="Gill J.E."/>
            <person name="Goldsmith A.D."/>
            <person name="Haas B."/>
            <person name="Hansen N.F."/>
            <person name="Hughes B."/>
            <person name="Huizar L."/>
            <person name="Hunter J.L."/>
            <person name="Jenkins J."/>
            <person name="Johnson-Hopson C."/>
            <person name="Khan S."/>
            <person name="Khaykin E."/>
            <person name="Kim C.J."/>
            <person name="Koo H.L."/>
            <person name="Kremenetskaia I."/>
            <person name="Kurtz D.B."/>
            <person name="Kwan A."/>
            <person name="Lam B."/>
            <person name="Langin-Hooper S."/>
            <person name="Lee A."/>
            <person name="Lee J.M."/>
            <person name="Lenz C.A."/>
            <person name="Li J.H."/>
            <person name="Li Y.-P."/>
            <person name="Lin X."/>
            <person name="Liu S.X."/>
            <person name="Liu Z.A."/>
            <person name="Luros J.S."/>
            <person name="Maiti R."/>
            <person name="Marziali A."/>
            <person name="Militscher J."/>
            <person name="Miranda M."/>
            <person name="Nguyen M."/>
            <person name="Nierman W.C."/>
            <person name="Osborne B.I."/>
            <person name="Pai G."/>
            <person name="Peterson J."/>
            <person name="Pham P.K."/>
            <person name="Rizzo M."/>
            <person name="Rooney T."/>
            <person name="Rowley D."/>
            <person name="Sakano H."/>
            <person name="Salzberg S.L."/>
            <person name="Schwartz J.R."/>
            <person name="Shinn P."/>
            <person name="Southwick A.M."/>
            <person name="Sun H."/>
            <person name="Tallon L.J."/>
            <person name="Tambunga G."/>
            <person name="Toriumi M.J."/>
            <person name="Town C.D."/>
            <person name="Utterback T."/>
            <person name="Van Aken S."/>
            <person name="Vaysberg M."/>
            <person name="Vysotskaia V.S."/>
            <person name="Walker M."/>
            <person name="Wu D."/>
            <person name="Yu G."/>
            <person name="Fraser C.M."/>
            <person name="Venter J.C."/>
            <person name="Davis R.W."/>
        </authorList>
    </citation>
    <scope>NUCLEOTIDE SEQUENCE [LARGE SCALE GENOMIC DNA]</scope>
    <source>
        <strain>cv. Columbia</strain>
    </source>
</reference>
<reference key="3">
    <citation type="journal article" date="2017" name="Plant J.">
        <title>Araport11: a complete reannotation of the Arabidopsis thaliana reference genome.</title>
        <authorList>
            <person name="Cheng C.Y."/>
            <person name="Krishnakumar V."/>
            <person name="Chan A.P."/>
            <person name="Thibaud-Nissen F."/>
            <person name="Schobel S."/>
            <person name="Town C.D."/>
        </authorList>
    </citation>
    <scope>GENOME REANNOTATION</scope>
    <source>
        <strain>cv. Columbia</strain>
    </source>
</reference>
<reference key="4">
    <citation type="submission" date="2004-09" db="EMBL/GenBank/DDBJ databases">
        <title>Large-scale analysis of RIKEN Arabidopsis full-length (RAFL) cDNAs.</title>
        <authorList>
            <person name="Totoki Y."/>
            <person name="Seki M."/>
            <person name="Ishida J."/>
            <person name="Nakajima M."/>
            <person name="Enju A."/>
            <person name="Kamiya A."/>
            <person name="Narusaka M."/>
            <person name="Shin-i T."/>
            <person name="Nakagawa M."/>
            <person name="Sakamoto N."/>
            <person name="Oishi K."/>
            <person name="Kohara Y."/>
            <person name="Kobayashi M."/>
            <person name="Toyoda A."/>
            <person name="Sakaki Y."/>
            <person name="Sakurai T."/>
            <person name="Iida K."/>
            <person name="Akiyama K."/>
            <person name="Satou M."/>
            <person name="Toyoda T."/>
            <person name="Konagaya A."/>
            <person name="Carninci P."/>
            <person name="Kawai J."/>
            <person name="Hayashizaki Y."/>
            <person name="Shinozaki K."/>
        </authorList>
    </citation>
    <scope>NUCLEOTIDE SEQUENCE [LARGE SCALE MRNA]</scope>
    <source>
        <strain>cv. Columbia</strain>
    </source>
</reference>
<reference key="5">
    <citation type="submission" date="2006-02" db="EMBL/GenBank/DDBJ databases">
        <title>Arabidopsis ORF clones.</title>
        <authorList>
            <person name="Shinn P."/>
            <person name="Chen H."/>
            <person name="Kim C.J."/>
            <person name="Ecker J.R."/>
        </authorList>
    </citation>
    <scope>NUCLEOTIDE SEQUENCE [LARGE SCALE MRNA]</scope>
    <source>
        <strain>cv. Columbia</strain>
    </source>
</reference>
<reference key="6">
    <citation type="journal article" date="2005" name="Plant Physiol.">
        <title>Roles of Arabidopsis AtREV1 and AtREV7 in translesion synthesis.</title>
        <authorList>
            <person name="Takahashi S."/>
            <person name="Sakamoto A."/>
            <person name="Sato S."/>
            <person name="Kato T."/>
            <person name="Tabata S."/>
            <person name="Tanaka A."/>
        </authorList>
    </citation>
    <scope>FUNCTION</scope>
</reference>
<evidence type="ECO:0000250" key="1"/>
<evidence type="ECO:0000255" key="2">
    <source>
        <dbReference type="PROSITE-ProRule" id="PRU00109"/>
    </source>
</evidence>
<evidence type="ECO:0000269" key="3">
    <source>
    </source>
</evidence>
<evidence type="ECO:0000305" key="4"/>
<feature type="chain" id="PRO_0000424419" description="DNA polymerase zeta processivity subunit">
    <location>
        <begin position="1"/>
        <end position="215"/>
    </location>
</feature>
<feature type="domain" description="HORMA" evidence="2">
    <location>
        <begin position="10"/>
        <end position="193"/>
    </location>
</feature>
<sequence length="215" mass="24393">MSRKDDNQSGEVGRTLVDFMEVAITMIVYLKGFYPSAAFERRRYMNVVVQRARHPELRDYIHSAASGLLPFIEKGLVERVAVVFFSEDNVPVERFIFKITIKPSCAALVEEGQLEFALRSFLIKLSVSKSLVKPLPLNCRWEVTAYLRSLPQVGSSKEAELWIPTDTKQWQNPPVLTPVKSLNSEPLCLQLYLEHPSLSEPLNLVNPEDVAPHDP</sequence>
<keyword id="KW-0227">DNA damage</keyword>
<keyword id="KW-0234">DNA repair</keyword>
<keyword id="KW-0539">Nucleus</keyword>
<keyword id="KW-1185">Reference proteome</keyword>
<protein>
    <recommendedName>
        <fullName>DNA polymerase zeta processivity subunit</fullName>
    </recommendedName>
    <alternativeName>
        <fullName>Revertibility protein 7 homolog</fullName>
        <shortName>AtREV7</shortName>
        <shortName>REV7 homolog</shortName>
    </alternativeName>
</protein>
<accession>Q94FL5</accession>
<accession>Q9FX75</accession>
<gene>
    <name type="primary">REV7</name>
    <name type="ordered locus">At1g16590</name>
    <name type="ORF">F19K19.10</name>
</gene>
<name>REV7_ARATH</name>
<dbReference type="EMBL" id="AF372829">
    <property type="protein sequence ID" value="AAK69719.1"/>
    <property type="molecule type" value="mRNA"/>
</dbReference>
<dbReference type="EMBL" id="AC011808">
    <property type="protein sequence ID" value="AAG10822.1"/>
    <property type="status" value="ALT_SEQ"/>
    <property type="molecule type" value="Genomic_DNA"/>
</dbReference>
<dbReference type="EMBL" id="CP002684">
    <property type="protein sequence ID" value="AEE29474.1"/>
    <property type="molecule type" value="Genomic_DNA"/>
</dbReference>
<dbReference type="EMBL" id="BT024601">
    <property type="protein sequence ID" value="ABD42999.1"/>
    <property type="molecule type" value="mRNA"/>
</dbReference>
<dbReference type="EMBL" id="AK175235">
    <property type="protein sequence ID" value="BAD42998.1"/>
    <property type="molecule type" value="mRNA"/>
</dbReference>
<dbReference type="PIR" id="B86301">
    <property type="entry name" value="B86301"/>
</dbReference>
<dbReference type="RefSeq" id="NP_564002.1">
    <property type="nucleotide sequence ID" value="NM_101522.4"/>
</dbReference>
<dbReference type="SMR" id="Q94FL5"/>
<dbReference type="FunCoup" id="Q94FL5">
    <property type="interactions" value="2523"/>
</dbReference>
<dbReference type="STRING" id="3702.Q94FL5"/>
<dbReference type="PaxDb" id="3702-AT1G16590.1"/>
<dbReference type="ProteomicsDB" id="236237"/>
<dbReference type="EnsemblPlants" id="AT1G16590.1">
    <property type="protein sequence ID" value="AT1G16590.1"/>
    <property type="gene ID" value="AT1G16590"/>
</dbReference>
<dbReference type="GeneID" id="838228"/>
<dbReference type="Gramene" id="AT1G16590.1">
    <property type="protein sequence ID" value="AT1G16590.1"/>
    <property type="gene ID" value="AT1G16590"/>
</dbReference>
<dbReference type="KEGG" id="ath:AT1G16590"/>
<dbReference type="Araport" id="AT1G16590"/>
<dbReference type="TAIR" id="AT1G16590">
    <property type="gene designation" value="REV7"/>
</dbReference>
<dbReference type="eggNOG" id="KOG3186">
    <property type="taxonomic scope" value="Eukaryota"/>
</dbReference>
<dbReference type="HOGENOM" id="CLU_050394_3_0_1"/>
<dbReference type="InParanoid" id="Q94FL5"/>
<dbReference type="OMA" id="CEDFPWI"/>
<dbReference type="PhylomeDB" id="Q94FL5"/>
<dbReference type="PRO" id="PR:Q94FL5"/>
<dbReference type="Proteomes" id="UP000006548">
    <property type="component" value="Chromosome 1"/>
</dbReference>
<dbReference type="ExpressionAtlas" id="Q94FL5">
    <property type="expression patterns" value="baseline and differential"/>
</dbReference>
<dbReference type="GO" id="GO:0005634">
    <property type="term" value="C:nucleus"/>
    <property type="evidence" value="ECO:0007669"/>
    <property type="project" value="UniProtKB-SubCell"/>
</dbReference>
<dbReference type="GO" id="GO:0006974">
    <property type="term" value="P:DNA damage response"/>
    <property type="evidence" value="ECO:0000315"/>
    <property type="project" value="TAIR"/>
</dbReference>
<dbReference type="GO" id="GO:0006281">
    <property type="term" value="P:DNA repair"/>
    <property type="evidence" value="ECO:0007669"/>
    <property type="project" value="UniProtKB-KW"/>
</dbReference>
<dbReference type="GO" id="GO:0010224">
    <property type="term" value="P:response to UV-B"/>
    <property type="evidence" value="ECO:0000315"/>
    <property type="project" value="TAIR"/>
</dbReference>
<dbReference type="FunFam" id="3.30.900.10:FF:000003">
    <property type="entry name" value="Mitotic spindle assembly checkpoint protein MAD2B"/>
    <property type="match status" value="1"/>
</dbReference>
<dbReference type="Gene3D" id="3.30.900.10">
    <property type="entry name" value="HORMA domain"/>
    <property type="match status" value="1"/>
</dbReference>
<dbReference type="InterPro" id="IPR003511">
    <property type="entry name" value="HORMA_dom"/>
</dbReference>
<dbReference type="InterPro" id="IPR036570">
    <property type="entry name" value="HORMA_dom_sf"/>
</dbReference>
<dbReference type="InterPro" id="IPR045091">
    <property type="entry name" value="Mad2-like"/>
</dbReference>
<dbReference type="PANTHER" id="PTHR11842">
    <property type="entry name" value="MITOTIC SPINDLE ASSEMBLY CHECKPOINT PROTEIN MAD2"/>
    <property type="match status" value="1"/>
</dbReference>
<dbReference type="PANTHER" id="PTHR11842:SF10">
    <property type="entry name" value="MITOTIC SPINDLE ASSEMBLY CHECKPOINT PROTEIN MAD2B"/>
    <property type="match status" value="1"/>
</dbReference>
<dbReference type="Pfam" id="PF02301">
    <property type="entry name" value="HORMA"/>
    <property type="match status" value="1"/>
</dbReference>
<dbReference type="SUPFAM" id="SSF56019">
    <property type="entry name" value="The spindle assembly checkpoint protein mad2"/>
    <property type="match status" value="1"/>
</dbReference>
<dbReference type="PROSITE" id="PS50815">
    <property type="entry name" value="HORMA"/>
    <property type="match status" value="1"/>
</dbReference>
<organism>
    <name type="scientific">Arabidopsis thaliana</name>
    <name type="common">Mouse-ear cress</name>
    <dbReference type="NCBI Taxonomy" id="3702"/>
    <lineage>
        <taxon>Eukaryota</taxon>
        <taxon>Viridiplantae</taxon>
        <taxon>Streptophyta</taxon>
        <taxon>Embryophyta</taxon>
        <taxon>Tracheophyta</taxon>
        <taxon>Spermatophyta</taxon>
        <taxon>Magnoliopsida</taxon>
        <taxon>eudicotyledons</taxon>
        <taxon>Gunneridae</taxon>
        <taxon>Pentapetalae</taxon>
        <taxon>rosids</taxon>
        <taxon>malvids</taxon>
        <taxon>Brassicales</taxon>
        <taxon>Brassicaceae</taxon>
        <taxon>Camelineae</taxon>
        <taxon>Arabidopsis</taxon>
    </lineage>
</organism>